<comment type="function">
    <text evidence="1">Reversibly transfers an adenylyl group from ATP to 4'-phosphopantetheine, yielding dephospho-CoA (dPCoA) and pyrophosphate.</text>
</comment>
<comment type="catalytic activity">
    <reaction evidence="1">
        <text>(R)-4'-phosphopantetheine + ATP + H(+) = 3'-dephospho-CoA + diphosphate</text>
        <dbReference type="Rhea" id="RHEA:19801"/>
        <dbReference type="ChEBI" id="CHEBI:15378"/>
        <dbReference type="ChEBI" id="CHEBI:30616"/>
        <dbReference type="ChEBI" id="CHEBI:33019"/>
        <dbReference type="ChEBI" id="CHEBI:57328"/>
        <dbReference type="ChEBI" id="CHEBI:61723"/>
        <dbReference type="EC" id="2.7.7.3"/>
    </reaction>
</comment>
<comment type="cofactor">
    <cofactor evidence="1">
        <name>Mg(2+)</name>
        <dbReference type="ChEBI" id="CHEBI:18420"/>
    </cofactor>
</comment>
<comment type="pathway">
    <text evidence="1">Cofactor biosynthesis; coenzyme A biosynthesis; CoA from (R)-pantothenate: step 4/5.</text>
</comment>
<comment type="subunit">
    <text evidence="1">Homohexamer.</text>
</comment>
<comment type="subcellular location">
    <subcellularLocation>
        <location evidence="1">Cytoplasm</location>
    </subcellularLocation>
</comment>
<comment type="similarity">
    <text evidence="1">Belongs to the bacterial CoaD family.</text>
</comment>
<proteinExistence type="inferred from homology"/>
<sequence length="163" mass="18743">MKQKAIYPGTFDPFTNGHLDVLERALNIFEEVIVVIAENCQKHALFTIEEREAMTREVTCDYPGVTVEVLHRGLLADYARQVGARAIVRGVRQVKDFEYEFQMSLLNRQLYPEVTTVFLMPNVKYTYVASSIIKEVAMLGGDVSKFVHPCVLEMMHQKREEQN</sequence>
<dbReference type="EC" id="2.7.7.3" evidence="1"/>
<dbReference type="EMBL" id="CP001110">
    <property type="protein sequence ID" value="ACF43465.1"/>
    <property type="molecule type" value="Genomic_DNA"/>
</dbReference>
<dbReference type="RefSeq" id="WP_012507957.1">
    <property type="nucleotide sequence ID" value="NC_011060.1"/>
</dbReference>
<dbReference type="SMR" id="B4SGQ2"/>
<dbReference type="STRING" id="324925.Ppha_1192"/>
<dbReference type="KEGG" id="pph:Ppha_1192"/>
<dbReference type="eggNOG" id="COG0669">
    <property type="taxonomic scope" value="Bacteria"/>
</dbReference>
<dbReference type="HOGENOM" id="CLU_100149_0_1_10"/>
<dbReference type="OrthoDB" id="9806661at2"/>
<dbReference type="UniPathway" id="UPA00241">
    <property type="reaction ID" value="UER00355"/>
</dbReference>
<dbReference type="Proteomes" id="UP000002724">
    <property type="component" value="Chromosome"/>
</dbReference>
<dbReference type="GO" id="GO:0005737">
    <property type="term" value="C:cytoplasm"/>
    <property type="evidence" value="ECO:0007669"/>
    <property type="project" value="UniProtKB-SubCell"/>
</dbReference>
<dbReference type="GO" id="GO:0005524">
    <property type="term" value="F:ATP binding"/>
    <property type="evidence" value="ECO:0007669"/>
    <property type="project" value="UniProtKB-KW"/>
</dbReference>
<dbReference type="GO" id="GO:0004595">
    <property type="term" value="F:pantetheine-phosphate adenylyltransferase activity"/>
    <property type="evidence" value="ECO:0007669"/>
    <property type="project" value="UniProtKB-UniRule"/>
</dbReference>
<dbReference type="GO" id="GO:0015937">
    <property type="term" value="P:coenzyme A biosynthetic process"/>
    <property type="evidence" value="ECO:0007669"/>
    <property type="project" value="UniProtKB-UniRule"/>
</dbReference>
<dbReference type="CDD" id="cd02163">
    <property type="entry name" value="PPAT"/>
    <property type="match status" value="1"/>
</dbReference>
<dbReference type="Gene3D" id="3.40.50.620">
    <property type="entry name" value="HUPs"/>
    <property type="match status" value="1"/>
</dbReference>
<dbReference type="HAMAP" id="MF_00151">
    <property type="entry name" value="PPAT_bact"/>
    <property type="match status" value="1"/>
</dbReference>
<dbReference type="InterPro" id="IPR004821">
    <property type="entry name" value="Cyt_trans-like"/>
</dbReference>
<dbReference type="InterPro" id="IPR001980">
    <property type="entry name" value="PPAT"/>
</dbReference>
<dbReference type="InterPro" id="IPR014729">
    <property type="entry name" value="Rossmann-like_a/b/a_fold"/>
</dbReference>
<dbReference type="NCBIfam" id="TIGR01510">
    <property type="entry name" value="coaD_prev_kdtB"/>
    <property type="match status" value="1"/>
</dbReference>
<dbReference type="NCBIfam" id="TIGR00125">
    <property type="entry name" value="cyt_tran_rel"/>
    <property type="match status" value="1"/>
</dbReference>
<dbReference type="PANTHER" id="PTHR21342">
    <property type="entry name" value="PHOSPHOPANTETHEINE ADENYLYLTRANSFERASE"/>
    <property type="match status" value="1"/>
</dbReference>
<dbReference type="PANTHER" id="PTHR21342:SF1">
    <property type="entry name" value="PHOSPHOPANTETHEINE ADENYLYLTRANSFERASE"/>
    <property type="match status" value="1"/>
</dbReference>
<dbReference type="Pfam" id="PF01467">
    <property type="entry name" value="CTP_transf_like"/>
    <property type="match status" value="1"/>
</dbReference>
<dbReference type="PRINTS" id="PR01020">
    <property type="entry name" value="LPSBIOSNTHSS"/>
</dbReference>
<dbReference type="SUPFAM" id="SSF52374">
    <property type="entry name" value="Nucleotidylyl transferase"/>
    <property type="match status" value="1"/>
</dbReference>
<accession>B4SGQ2</accession>
<gene>
    <name evidence="1" type="primary">coaD</name>
    <name type="ordered locus">Ppha_1192</name>
</gene>
<protein>
    <recommendedName>
        <fullName evidence="1">Phosphopantetheine adenylyltransferase</fullName>
        <ecNumber evidence="1">2.7.7.3</ecNumber>
    </recommendedName>
    <alternativeName>
        <fullName evidence="1">Dephospho-CoA pyrophosphorylase</fullName>
    </alternativeName>
    <alternativeName>
        <fullName evidence="1">Pantetheine-phosphate adenylyltransferase</fullName>
        <shortName evidence="1">PPAT</shortName>
    </alternativeName>
</protein>
<reference key="1">
    <citation type="submission" date="2008-06" db="EMBL/GenBank/DDBJ databases">
        <title>Complete sequence of Pelodictyon phaeoclathratiforme BU-1.</title>
        <authorList>
            <consortium name="US DOE Joint Genome Institute"/>
            <person name="Lucas S."/>
            <person name="Copeland A."/>
            <person name="Lapidus A."/>
            <person name="Glavina del Rio T."/>
            <person name="Dalin E."/>
            <person name="Tice H."/>
            <person name="Bruce D."/>
            <person name="Goodwin L."/>
            <person name="Pitluck S."/>
            <person name="Schmutz J."/>
            <person name="Larimer F."/>
            <person name="Land M."/>
            <person name="Hauser L."/>
            <person name="Kyrpides N."/>
            <person name="Mikhailova N."/>
            <person name="Liu Z."/>
            <person name="Li T."/>
            <person name="Zhao F."/>
            <person name="Overmann J."/>
            <person name="Bryant D.A."/>
            <person name="Richardson P."/>
        </authorList>
    </citation>
    <scope>NUCLEOTIDE SEQUENCE [LARGE SCALE GENOMIC DNA]</scope>
    <source>
        <strain>DSM 5477 / BU-1</strain>
    </source>
</reference>
<evidence type="ECO:0000255" key="1">
    <source>
        <dbReference type="HAMAP-Rule" id="MF_00151"/>
    </source>
</evidence>
<name>COAD_PELPB</name>
<organism>
    <name type="scientific">Pelodictyon phaeoclathratiforme (strain DSM 5477 / BU-1)</name>
    <dbReference type="NCBI Taxonomy" id="324925"/>
    <lineage>
        <taxon>Bacteria</taxon>
        <taxon>Pseudomonadati</taxon>
        <taxon>Chlorobiota</taxon>
        <taxon>Chlorobiia</taxon>
        <taxon>Chlorobiales</taxon>
        <taxon>Chlorobiaceae</taxon>
        <taxon>Chlorobium/Pelodictyon group</taxon>
        <taxon>Pelodictyon</taxon>
    </lineage>
</organism>
<feature type="chain" id="PRO_1000096820" description="Phosphopantetheine adenylyltransferase">
    <location>
        <begin position="1"/>
        <end position="163"/>
    </location>
</feature>
<feature type="binding site" evidence="1">
    <location>
        <begin position="10"/>
        <end position="11"/>
    </location>
    <ligand>
        <name>ATP</name>
        <dbReference type="ChEBI" id="CHEBI:30616"/>
    </ligand>
</feature>
<feature type="binding site" evidence="1">
    <location>
        <position position="10"/>
    </location>
    <ligand>
        <name>substrate</name>
    </ligand>
</feature>
<feature type="binding site" evidence="1">
    <location>
        <position position="18"/>
    </location>
    <ligand>
        <name>ATP</name>
        <dbReference type="ChEBI" id="CHEBI:30616"/>
    </ligand>
</feature>
<feature type="binding site" evidence="1">
    <location>
        <position position="42"/>
    </location>
    <ligand>
        <name>substrate</name>
    </ligand>
</feature>
<feature type="binding site" evidence="1">
    <location>
        <position position="75"/>
    </location>
    <ligand>
        <name>substrate</name>
    </ligand>
</feature>
<feature type="binding site" evidence="1">
    <location>
        <position position="89"/>
    </location>
    <ligand>
        <name>substrate</name>
    </ligand>
</feature>
<feature type="binding site" evidence="1">
    <location>
        <begin position="90"/>
        <end position="92"/>
    </location>
    <ligand>
        <name>ATP</name>
        <dbReference type="ChEBI" id="CHEBI:30616"/>
    </ligand>
</feature>
<feature type="binding site" evidence="1">
    <location>
        <position position="100"/>
    </location>
    <ligand>
        <name>ATP</name>
        <dbReference type="ChEBI" id="CHEBI:30616"/>
    </ligand>
</feature>
<feature type="binding site" evidence="1">
    <location>
        <begin position="125"/>
        <end position="131"/>
    </location>
    <ligand>
        <name>ATP</name>
        <dbReference type="ChEBI" id="CHEBI:30616"/>
    </ligand>
</feature>
<feature type="site" description="Transition state stabilizer" evidence="1">
    <location>
        <position position="18"/>
    </location>
</feature>
<keyword id="KW-0067">ATP-binding</keyword>
<keyword id="KW-0173">Coenzyme A biosynthesis</keyword>
<keyword id="KW-0963">Cytoplasm</keyword>
<keyword id="KW-0460">Magnesium</keyword>
<keyword id="KW-0547">Nucleotide-binding</keyword>
<keyword id="KW-0548">Nucleotidyltransferase</keyword>
<keyword id="KW-1185">Reference proteome</keyword>
<keyword id="KW-0808">Transferase</keyword>